<keyword id="KW-0002">3D-structure</keyword>
<keyword id="KW-0963">Cytoplasm</keyword>
<keyword id="KW-0903">Direct protein sequencing</keyword>
<keyword id="KW-0333">Golgi apparatus</keyword>
<keyword id="KW-1017">Isopeptide bond</keyword>
<keyword id="KW-0472">Membrane</keyword>
<keyword id="KW-0597">Phosphoprotein</keyword>
<keyword id="KW-0653">Protein transport</keyword>
<keyword id="KW-1185">Reference proteome</keyword>
<keyword id="KW-0813">Transport</keyword>
<keyword id="KW-0832">Ubl conjugation</keyword>
<organism>
    <name type="scientific">Saccharomyces cerevisiae (strain ATCC 204508 / S288c)</name>
    <name type="common">Baker's yeast</name>
    <dbReference type="NCBI Taxonomy" id="559292"/>
    <lineage>
        <taxon>Eukaryota</taxon>
        <taxon>Fungi</taxon>
        <taxon>Dikarya</taxon>
        <taxon>Ascomycota</taxon>
        <taxon>Saccharomycotina</taxon>
        <taxon>Saccharomycetes</taxon>
        <taxon>Saccharomycetales</taxon>
        <taxon>Saccharomycetaceae</taxon>
        <taxon>Saccharomyces</taxon>
    </lineage>
</organism>
<comment type="function">
    <text evidence="2 6 7 9 10 12 13 14">Required for transport of secretory proteins from the Golgi complex. Catalyzes the transfer of phosphatidylinositol (PI) and phosphatidylcholine (PC) between membranes in vitro. Essential for viability and secretion (PubMed:2215682, PubMed:2466847). Exchanges its bound phospholipid with phospholipid monomers that reside in membrane bilayers (PubMed:16997918). Regulates specific trans-Golgi export pathways, like transport from endosomes to the trans-Golgi or transport from the plasma membrane to the vacuole at the level of the endosome (PubMed:19129178). Increased membrane curvature and lipid unsaturation levels at the trans-Golgi membrane promotes membrane binding and phospholipid transfer of SEC14. Thus, SEC14 may act at the trans-Golgi membrane to exchange lipids and promote vesicle formation (PubMed:32828847). The phosphatidylcholine-bound form of SEC14 represses the CDP-choline pathway activity by inhibiting CCTase, the rate-determining enzyme of the CDP-choline pathway (PubMed:7816798). PI binding/transfer is dispensable for function in vivo (PubMed:10488334). Required for trafficking and localization of lipid raft proteins to the plasma membrane (PubMed:23383173).</text>
</comment>
<comment type="catalytic activity">
    <reaction evidence="3">
        <text>a 1,2-diacyl-sn-glycero-3-phospho-(1D-myo-inositol)(in) = a 1,2-diacyl-sn-glycero-3-phospho-(1D-myo-inositol)(out)</text>
        <dbReference type="Rhea" id="RHEA:38691"/>
        <dbReference type="ChEBI" id="CHEBI:57880"/>
    </reaction>
    <physiologicalReaction direction="left-to-right" evidence="3">
        <dbReference type="Rhea" id="RHEA:38692"/>
    </physiologicalReaction>
</comment>
<comment type="catalytic activity">
    <reaction evidence="3">
        <text>a 1,2-diacyl-sn-glycero-3-phosphocholine(in) = a 1,2-diacyl-sn-glycero-3-phosphocholine(out)</text>
        <dbReference type="Rhea" id="RHEA:38571"/>
        <dbReference type="ChEBI" id="CHEBI:57643"/>
    </reaction>
    <physiologicalReaction direction="left-to-right" evidence="3">
        <dbReference type="Rhea" id="RHEA:38572"/>
    </physiologicalReaction>
</comment>
<comment type="activity regulation">
    <text evidence="14">The inhibitor activity of SEC14 is controlled by whether PI or PC is bound to SEC14. The pPC-bound form of SEC14 is an inhibitor, while the PI-bound form is not. The phospholipid binding/exchange activity of SEC14 represents a mechanism by which the regulatory activity of SEC14 is itself controlled.</text>
</comment>
<comment type="interaction">
    <interactant intactId="EBI-16535">
        <id>P24280</id>
    </interactant>
    <interactant intactId="EBI-24588">
        <id>P38797</id>
        <label>PTC7</label>
    </interactant>
    <organismsDiffer>false</organismsDiffer>
    <experiments>5</experiments>
</comment>
<comment type="subcellular location">
    <subcellularLocation>
        <location evidence="8">Golgi apparatus membrane</location>
        <topology>Peripheral membrane protein</topology>
    </subcellularLocation>
    <subcellularLocation>
        <location evidence="4 8 12">Cytoplasm</location>
    </subcellularLocation>
</comment>
<comment type="miscellaneous">
    <text evidence="5">Present with 84300 molecules/cell in log phase SD medium.</text>
</comment>
<feature type="initiator methionine" description="Removed" evidence="11">
    <location>
        <position position="1"/>
    </location>
</feature>
<feature type="chain" id="PRO_0000210744" description="SEC14 cytosolic factor">
    <location>
        <begin position="2"/>
        <end position="304"/>
    </location>
</feature>
<feature type="domain" description="CRAL-TRIO" evidence="1">
    <location>
        <begin position="99"/>
        <end position="272"/>
    </location>
</feature>
<feature type="modified residue" description="Phosphoserine" evidence="17 18">
    <location>
        <position position="302"/>
    </location>
</feature>
<feature type="cross-link" description="Glycyl lysine isopeptide (Lys-Gly) (interchain with G-Cter in ubiquitin)" evidence="19">
    <location>
        <position position="42"/>
    </location>
</feature>
<feature type="cross-link" description="Glycyl lysine isopeptide (Lys-Gly) (interchain with G-Cter in ubiquitin)" evidence="19">
    <location>
        <position position="84"/>
    </location>
</feature>
<feature type="mutagenesis site" description="Inactivates phosphatidylinositol, but not phosphatidylcholine, transfer activity, but rescues the lethality and Golgi secretory defects associated with sec14 null mutations; when associated with A-239." evidence="2">
    <original>K</original>
    <variation>A</variation>
    <location>
        <position position="66"/>
    </location>
</feature>
<feature type="mutagenesis site" description="Inactivates phosphatidylinositol, but not phosphatidylcholine, transfer activity, but rescues the lethality and Golgi secretory defects associated with sec14 null mutations; when associated with A-66." evidence="2">
    <original>K</original>
    <variation>A</variation>
    <location>
        <position position="239"/>
    </location>
</feature>
<feature type="mutagenesis site" description="In SEC14(ts); temperature-sesnitive allele that is targeted to the proteasome at the restrictive temperature." evidence="10">
    <original>G</original>
    <variation>D</variation>
    <location>
        <position position="266"/>
    </location>
</feature>
<feature type="helix" evidence="21">
    <location>
        <begin position="4"/>
        <end position="10"/>
    </location>
</feature>
<feature type="turn" evidence="20">
    <location>
        <begin position="26"/>
        <end position="28"/>
    </location>
</feature>
<feature type="helix" evidence="21">
    <location>
        <begin position="31"/>
        <end position="46"/>
    </location>
</feature>
<feature type="helix" evidence="21">
    <location>
        <begin position="55"/>
        <end position="64"/>
    </location>
</feature>
<feature type="turn" evidence="21">
    <location>
        <begin position="65"/>
        <end position="67"/>
    </location>
</feature>
<feature type="helix" evidence="21">
    <location>
        <begin position="69"/>
        <end position="86"/>
    </location>
</feature>
<feature type="helix" evidence="21">
    <location>
        <begin position="88"/>
        <end position="90"/>
    </location>
</feature>
<feature type="helix" evidence="21">
    <location>
        <begin position="91"/>
        <end position="94"/>
    </location>
</feature>
<feature type="helix" evidence="21">
    <location>
        <begin position="100"/>
        <end position="103"/>
    </location>
</feature>
<feature type="turn" evidence="21">
    <location>
        <begin position="104"/>
        <end position="106"/>
    </location>
</feature>
<feature type="strand" evidence="21">
    <location>
        <begin position="109"/>
        <end position="114"/>
    </location>
</feature>
<feature type="strand" evidence="21">
    <location>
        <begin position="120"/>
        <end position="125"/>
    </location>
</feature>
<feature type="helix" evidence="22">
    <location>
        <begin position="126"/>
        <end position="128"/>
    </location>
</feature>
<feature type="helix" evidence="21">
    <location>
        <begin position="131"/>
        <end position="134"/>
    </location>
</feature>
<feature type="turn" evidence="21">
    <location>
        <begin position="135"/>
        <end position="137"/>
    </location>
</feature>
<feature type="helix" evidence="21">
    <location>
        <begin position="140"/>
        <end position="156"/>
    </location>
</feature>
<feature type="helix" evidence="21">
    <location>
        <begin position="158"/>
        <end position="166"/>
    </location>
</feature>
<feature type="strand" evidence="21">
    <location>
        <begin position="173"/>
        <end position="178"/>
    </location>
</feature>
<feature type="helix" evidence="21">
    <location>
        <begin position="184"/>
        <end position="189"/>
    </location>
</feature>
<feature type="helix" evidence="21">
    <location>
        <begin position="191"/>
        <end position="204"/>
    </location>
</feature>
<feature type="strand" evidence="21">
    <location>
        <begin position="209"/>
        <end position="216"/>
    </location>
</feature>
<feature type="helix" evidence="21">
    <location>
        <begin position="219"/>
        <end position="228"/>
    </location>
</feature>
<feature type="helix" evidence="21">
    <location>
        <begin position="229"/>
        <end position="231"/>
    </location>
</feature>
<feature type="helix" evidence="21">
    <location>
        <begin position="234"/>
        <end position="237"/>
    </location>
</feature>
<feature type="strand" evidence="21">
    <location>
        <begin position="240"/>
        <end position="242"/>
    </location>
</feature>
<feature type="helix" evidence="21">
    <location>
        <begin position="248"/>
        <end position="254"/>
    </location>
</feature>
<feature type="turn" evidence="21">
    <location>
        <begin position="257"/>
        <end position="259"/>
    </location>
</feature>
<feature type="helix" evidence="21">
    <location>
        <begin position="262"/>
        <end position="264"/>
    </location>
</feature>
<feature type="helix" evidence="22">
    <location>
        <begin position="272"/>
        <end position="274"/>
    </location>
</feature>
<feature type="helix" evidence="21">
    <location>
        <begin position="277"/>
        <end position="279"/>
    </location>
</feature>
<feature type="helix" evidence="21">
    <location>
        <begin position="284"/>
        <end position="286"/>
    </location>
</feature>
<feature type="turn" evidence="21">
    <location>
        <begin position="288"/>
        <end position="290"/>
    </location>
</feature>
<reference key="1">
    <citation type="journal article" date="1989" name="J. Cell Biol.">
        <title>The Saccharomyces cerevisiae SEC14 gene encodes a cytosolic factor that is required for transport of secretory proteins from the yeast Golgi complex.</title>
        <authorList>
            <person name="Bankaitis V.A."/>
            <person name="Malehorn D.E."/>
            <person name="Emr S.D."/>
            <person name="Greene R."/>
        </authorList>
    </citation>
    <scope>NUCLEOTIDE SEQUENCE [GENOMIC DNA]</scope>
    <scope>FUNCTION</scope>
    <scope>SUBCELLULAR LOCATION</scope>
    <source>
        <strain>CTY1-1A</strain>
    </source>
</reference>
<reference key="2">
    <citation type="journal article" date="1997" name="Nature">
        <title>The nucleotide sequence of Saccharomyces cerevisiae chromosome XIII.</title>
        <authorList>
            <person name="Bowman S."/>
            <person name="Churcher C.M."/>
            <person name="Badcock K."/>
            <person name="Brown D."/>
            <person name="Chillingworth T."/>
            <person name="Connor R."/>
            <person name="Dedman K."/>
            <person name="Devlin K."/>
            <person name="Gentles S."/>
            <person name="Hamlin N."/>
            <person name="Hunt S."/>
            <person name="Jagels K."/>
            <person name="Lye G."/>
            <person name="Moule S."/>
            <person name="Odell C."/>
            <person name="Pearson D."/>
            <person name="Rajandream M.A."/>
            <person name="Rice P."/>
            <person name="Skelton J."/>
            <person name="Walsh S.V."/>
            <person name="Whitehead S."/>
            <person name="Barrell B.G."/>
        </authorList>
    </citation>
    <scope>NUCLEOTIDE SEQUENCE [LARGE SCALE GENOMIC DNA]</scope>
    <source>
        <strain>ATCC 204508 / S288c</strain>
    </source>
</reference>
<reference key="3">
    <citation type="journal article" date="2014" name="G3 (Bethesda)">
        <title>The reference genome sequence of Saccharomyces cerevisiae: Then and now.</title>
        <authorList>
            <person name="Engel S.R."/>
            <person name="Dietrich F.S."/>
            <person name="Fisk D.G."/>
            <person name="Binkley G."/>
            <person name="Balakrishnan R."/>
            <person name="Costanzo M.C."/>
            <person name="Dwight S.S."/>
            <person name="Hitz B.C."/>
            <person name="Karra K."/>
            <person name="Nash R.S."/>
            <person name="Weng S."/>
            <person name="Wong E.D."/>
            <person name="Lloyd P."/>
            <person name="Skrzypek M.S."/>
            <person name="Miyasato S.R."/>
            <person name="Simison M."/>
            <person name="Cherry J.M."/>
        </authorList>
    </citation>
    <scope>GENOME REANNOTATION</scope>
    <source>
        <strain>ATCC 204508 / S288c</strain>
    </source>
</reference>
<reference key="4">
    <citation type="journal article" date="1990" name="J. Biol. Chem.">
        <title>The gene encoding the phosphatidylinositol transfer protein is essential for cell growth.</title>
        <authorList>
            <person name="Aitken J.F."/>
            <person name="van Heusden G.P.H."/>
            <person name="Temkin M."/>
            <person name="Dowhan W."/>
        </authorList>
    </citation>
    <scope>PROTEIN SEQUENCE OF 2-31</scope>
</reference>
<reference key="5">
    <citation type="journal article" date="1990" name="Nature">
        <title>An essential role for a phospholipid transfer protein in yeast Golgi function.</title>
        <authorList>
            <person name="Bankaitis V.A."/>
            <person name="Aitken J.R."/>
            <person name="Cleves A.E."/>
            <person name="Dowhan W."/>
        </authorList>
    </citation>
    <scope>FUNCTION</scope>
</reference>
<reference key="6">
    <citation type="journal article" date="1991" name="Cell">
        <title>Mutations in the CDP-choline pathway for phospholipid biosynthesis bypass the requirement for an essential phospholipid transfer protein.</title>
        <authorList>
            <person name="Cleves A.E."/>
            <person name="McGee T.P."/>
            <person name="Whitters E.A."/>
            <person name="Champion K.M."/>
            <person name="Aitken J.R."/>
            <person name="Dowhan W."/>
            <person name="Goebl M."/>
            <person name="Bankaitis V.A."/>
        </authorList>
    </citation>
    <scope>SUBCELLULAR LOCATION</scope>
</reference>
<reference key="7">
    <citation type="journal article" date="1995" name="Proc. Natl. Acad. Sci. U.S.A.">
        <title>The Saccharomyces cerevisiae phosphatidylinositol-transfer protein effects a ligand-dependent inhibition of choline-phosphate cytidylyltransferase activity.</title>
        <authorList>
            <person name="Skinner H.B."/>
            <person name="McGee T.P."/>
            <person name="McMaster C.R."/>
            <person name="Fry M.R."/>
            <person name="Bell R.M."/>
            <person name="Bankaitis V.A."/>
        </authorList>
    </citation>
    <scope>FUNCTION</scope>
    <scope>ACTIVITY REGULATION</scope>
</reference>
<reference key="8">
    <citation type="journal article" date="1999" name="Mol. Cell">
        <title>Yeast Sec14p deficient in phosphatidylinositol transfer activity is functional in vivo.</title>
        <authorList>
            <person name="Phillips S.E."/>
            <person name="Sha B."/>
            <person name="Topalof L."/>
            <person name="Xie Z."/>
            <person name="Alb J.G."/>
            <person name="Klenchin V.A."/>
            <person name="Swigart P."/>
            <person name="Cockcroft S."/>
            <person name="Martin T.F."/>
            <person name="Luo M."/>
            <person name="Bankaitis V.A."/>
        </authorList>
    </citation>
    <scope>FUNCTION</scope>
    <scope>MUTAGENESIS OF LYS-66 AND LYS-239</scope>
</reference>
<reference key="9">
    <citation type="journal article" date="2000" name="Mol. Biol. Cell">
        <title>Identification of a novel family of nonclassic yeast phosphatidylinositol transfer proteins whose function modulates phospholipase D activity and Sec14p-independent cell growth.</title>
        <authorList>
            <person name="Li X."/>
            <person name="Routt S.M."/>
            <person name="Xie Z."/>
            <person name="Cui X."/>
            <person name="Fang M."/>
            <person name="Kearns M.A."/>
            <person name="Bard M."/>
            <person name="Kirsch D.R."/>
            <person name="Bankaitis V.A."/>
        </authorList>
    </citation>
    <scope>CATALYTIC ACTIVITY</scope>
</reference>
<reference key="10">
    <citation type="journal article" date="2003" name="Eur. J. Biochem.">
        <title>Subcellular localization of yeast Sec14 homologues and their involvement in regulation of phospholipid turnover.</title>
        <authorList>
            <person name="Schnabl M."/>
            <person name="Oskolkova O.V."/>
            <person name="Holic R."/>
            <person name="Brezna B."/>
            <person name="Pichler H."/>
            <person name="Zagorsek M."/>
            <person name="Kohlwein S.D."/>
            <person name="Paltauf F."/>
            <person name="Daum G."/>
            <person name="Griac P."/>
        </authorList>
    </citation>
    <scope>SUBCELLULAR LOCATION</scope>
</reference>
<reference key="11">
    <citation type="journal article" date="2003" name="Nature">
        <title>Global analysis of protein expression in yeast.</title>
        <authorList>
            <person name="Ghaemmaghami S."/>
            <person name="Huh W.-K."/>
            <person name="Bower K."/>
            <person name="Howson R.W."/>
            <person name="Belle A."/>
            <person name="Dephoure N."/>
            <person name="O'Shea E.K."/>
            <person name="Weissman J.S."/>
        </authorList>
    </citation>
    <scope>LEVEL OF PROTEIN EXPRESSION [LARGE SCALE ANALYSIS]</scope>
</reference>
<reference key="12">
    <citation type="journal article" date="2006" name="J. Biol. Chem.">
        <title>The chemistry of phospholipid binding by the Saccharomyces cerevisiae phosphatidylinositol transfer protein Sec14p as determined by EPR spectroscopy.</title>
        <authorList>
            <person name="Smirnova T.I."/>
            <person name="Chadwick T.G."/>
            <person name="MacArthur R."/>
            <person name="Poluektov O."/>
            <person name="Song L."/>
            <person name="Ryan M.M."/>
            <person name="Schaaf G."/>
            <person name="Bankaitis V.A."/>
        </authorList>
    </citation>
    <scope>FUNCTION</scope>
</reference>
<reference key="13">
    <citation type="journal article" date="2008" name="Mol. Cell. Proteomics">
        <title>A multidimensional chromatography technology for in-depth phosphoproteome analysis.</title>
        <authorList>
            <person name="Albuquerque C.P."/>
            <person name="Smolka M.B."/>
            <person name="Payne S.H."/>
            <person name="Bafna V."/>
            <person name="Eng J."/>
            <person name="Zhou H."/>
        </authorList>
    </citation>
    <scope>PHOSPHORYLATION [LARGE SCALE ANALYSIS] AT SER-302</scope>
    <scope>IDENTIFICATION BY MASS SPECTROMETRY [LARGE SCALE ANALYSIS]</scope>
</reference>
<reference key="14">
    <citation type="journal article" date="2009" name="J. Biol. Chem.">
        <title>Phospholipid transfer protein Sec14 is required for trafficking from endosomes and regulates distinct trans-Golgi export pathways.</title>
        <authorList>
            <person name="Curwin A.J."/>
            <person name="Fairn G.D."/>
            <person name="McMaster C.R."/>
        </authorList>
    </citation>
    <scope>FUNCTION</scope>
</reference>
<reference key="15">
    <citation type="journal article" date="2009" name="Science">
        <title>Global analysis of Cdk1 substrate phosphorylation sites provides insights into evolution.</title>
        <authorList>
            <person name="Holt L.J."/>
            <person name="Tuch B.B."/>
            <person name="Villen J."/>
            <person name="Johnson A.D."/>
            <person name="Gygi S.P."/>
            <person name="Morgan D.O."/>
        </authorList>
    </citation>
    <scope>PHOSPHORYLATION [LARGE SCALE ANALYSIS] AT SER-302</scope>
    <scope>IDENTIFICATION BY MASS SPECTROMETRY [LARGE SCALE ANALYSIS]</scope>
</reference>
<reference key="16">
    <citation type="journal article" date="2012" name="Proteomics">
        <title>Sites of ubiquitin attachment in Saccharomyces cerevisiae.</title>
        <authorList>
            <person name="Starita L.M."/>
            <person name="Lo R.S."/>
            <person name="Eng J.K."/>
            <person name="von Haller P.D."/>
            <person name="Fields S."/>
        </authorList>
    </citation>
    <scope>UBIQUITINATION [LARGE SCALE ANALYSIS] AT LYS-42 AND LYS-84</scope>
    <scope>IDENTIFICATION BY MASS SPECTROMETRY [LARGE SCALE ANALYSIS]</scope>
</reference>
<reference key="17">
    <citation type="journal article" date="2013" name="PLoS ONE">
        <title>Localization of lipid raft proteins to the plasma membrane is a major function of the phospholipid transfer protein Sec14.</title>
        <authorList>
            <person name="Curwin A.J."/>
            <person name="Leblanc M.A."/>
            <person name="Fairn G.D."/>
            <person name="McMaster C.R."/>
        </authorList>
    </citation>
    <scope>FUNCTION</scope>
    <scope>MUTAGENESIS OF GLY-266</scope>
</reference>
<reference key="18">
    <citation type="journal article" date="2021" name="Biochim. Biophys. Acta">
        <title>Biophysical parameters of the Sec14 phospholipid exchange cycle - Effect of lipid packing in membranes.</title>
        <authorList>
            <person name="Sugiura T."/>
            <person name="Nakao H."/>
            <person name="Ikeda K."/>
            <person name="Khan D."/>
            <person name="Nile A.H."/>
            <person name="Bankaitis V.A."/>
            <person name="Nakano M."/>
        </authorList>
    </citation>
    <scope>FUNCTION</scope>
</reference>
<reference evidence="15" key="19">
    <citation type="journal article" date="1998" name="Nature">
        <title>Crystal structure of the Saccharomyces cerevisiae phosphatidylinositol-transfer protein.</title>
        <authorList>
            <person name="Sha B."/>
            <person name="Phillips S.E."/>
            <person name="Bankaitis V.A."/>
            <person name="Luo M."/>
        </authorList>
    </citation>
    <scope>X-RAY CRYSTALLOGRAPHY (2.5 ANGSTROMS) OF 4-299</scope>
</reference>
<reference evidence="16" key="20">
    <citation type="journal article" date="2018" name="Cell Chem. Biol.">
        <title>Target identification and mechanism of action of picolinamide and benzamide chemotypes with antifungal properties.</title>
        <authorList>
            <person name="Pries V."/>
            <person name="Nocker C."/>
            <person name="Khan D."/>
            <person name="Johnen P."/>
            <person name="Hong Z."/>
            <person name="Tripathi A."/>
            <person name="Keller A.L."/>
            <person name="Fitz M."/>
            <person name="Perruccio F."/>
            <person name="Filipuzzi I."/>
            <person name="Thavam S."/>
            <person name="Aust T."/>
            <person name="Riedl R."/>
            <person name="Ziegler S."/>
            <person name="Bono F."/>
            <person name="Schaaf G."/>
            <person name="Bankaitis V.A."/>
            <person name="Waldmann H."/>
            <person name="Hoepfner D."/>
        </authorList>
    </citation>
    <scope>X-RAY CRYSTALLOGRAPHY (2.60 ANGSTROMS)</scope>
</reference>
<name>SEC14_YEAST</name>
<evidence type="ECO:0000255" key="1">
    <source>
        <dbReference type="PROSITE-ProRule" id="PRU00056"/>
    </source>
</evidence>
<evidence type="ECO:0000269" key="2">
    <source>
    </source>
</evidence>
<evidence type="ECO:0000269" key="3">
    <source>
    </source>
</evidence>
<evidence type="ECO:0000269" key="4">
    <source>
    </source>
</evidence>
<evidence type="ECO:0000269" key="5">
    <source>
    </source>
</evidence>
<evidence type="ECO:0000269" key="6">
    <source>
    </source>
</evidence>
<evidence type="ECO:0000269" key="7">
    <source>
    </source>
</evidence>
<evidence type="ECO:0000269" key="8">
    <source>
    </source>
</evidence>
<evidence type="ECO:0000269" key="9">
    <source>
    </source>
</evidence>
<evidence type="ECO:0000269" key="10">
    <source>
    </source>
</evidence>
<evidence type="ECO:0000269" key="11">
    <source>
    </source>
</evidence>
<evidence type="ECO:0000269" key="12">
    <source>
    </source>
</evidence>
<evidence type="ECO:0000269" key="13">
    <source>
    </source>
</evidence>
<evidence type="ECO:0000269" key="14">
    <source>
    </source>
</evidence>
<evidence type="ECO:0007744" key="15">
    <source>
        <dbReference type="PDB" id="1AUA"/>
    </source>
</evidence>
<evidence type="ECO:0007744" key="16">
    <source>
        <dbReference type="PDB" id="6F0E"/>
    </source>
</evidence>
<evidence type="ECO:0007744" key="17">
    <source>
    </source>
</evidence>
<evidence type="ECO:0007744" key="18">
    <source>
    </source>
</evidence>
<evidence type="ECO:0007744" key="19">
    <source>
    </source>
</evidence>
<evidence type="ECO:0007829" key="20">
    <source>
        <dbReference type="PDB" id="1AUA"/>
    </source>
</evidence>
<evidence type="ECO:0007829" key="21">
    <source>
        <dbReference type="PDB" id="7ZG9"/>
    </source>
</evidence>
<evidence type="ECO:0007829" key="22">
    <source>
        <dbReference type="PDB" id="7ZGD"/>
    </source>
</evidence>
<protein>
    <recommendedName>
        <fullName>SEC14 cytosolic factor</fullName>
    </recommendedName>
    <alternativeName>
        <fullName>Phosphatidylinositol/phosphatidylcholine transfer protein</fullName>
        <shortName>PI/PC TP</shortName>
    </alternativeName>
</protein>
<gene>
    <name type="primary">SEC14</name>
    <name type="synonym">PIT1</name>
    <name type="ordered locus">YMR079W</name>
    <name type="ORF">YM9582.04</name>
</gene>
<proteinExistence type="evidence at protein level"/>
<dbReference type="EMBL" id="X15483">
    <property type="protein sequence ID" value="CAA33511.1"/>
    <property type="molecule type" value="Genomic_DNA"/>
</dbReference>
<dbReference type="EMBL" id="Z49259">
    <property type="protein sequence ID" value="CAA89225.1"/>
    <property type="molecule type" value="Genomic_DNA"/>
</dbReference>
<dbReference type="EMBL" id="BK006946">
    <property type="protein sequence ID" value="DAA09977.1"/>
    <property type="molecule type" value="Genomic_DNA"/>
</dbReference>
<dbReference type="PIR" id="A30106">
    <property type="entry name" value="A30106"/>
</dbReference>
<dbReference type="RefSeq" id="NP_013796.1">
    <property type="nucleotide sequence ID" value="NM_001182578.1"/>
</dbReference>
<dbReference type="PDB" id="1AUA">
    <property type="method" value="X-ray"/>
    <property type="resolution" value="2.50 A"/>
    <property type="chains" value="A=4-299"/>
</dbReference>
<dbReference type="PDB" id="6F0E">
    <property type="method" value="X-ray"/>
    <property type="resolution" value="2.60 A"/>
    <property type="chains" value="A=1-304"/>
</dbReference>
<dbReference type="PDB" id="7ZG9">
    <property type="method" value="X-ray"/>
    <property type="resolution" value="1.76 A"/>
    <property type="chains" value="A/B=3-301"/>
</dbReference>
<dbReference type="PDB" id="7ZGA">
    <property type="method" value="X-ray"/>
    <property type="resolution" value="2.30 A"/>
    <property type="chains" value="A=3-298"/>
</dbReference>
<dbReference type="PDB" id="7ZGB">
    <property type="method" value="X-ray"/>
    <property type="resolution" value="2.70 A"/>
    <property type="chains" value="A=4-299"/>
</dbReference>
<dbReference type="PDB" id="7ZGC">
    <property type="method" value="X-ray"/>
    <property type="resolution" value="2.24 A"/>
    <property type="chains" value="A=1-304"/>
</dbReference>
<dbReference type="PDB" id="7ZGD">
    <property type="method" value="X-ray"/>
    <property type="resolution" value="2.08 A"/>
    <property type="chains" value="A=1-304"/>
</dbReference>
<dbReference type="PDBsum" id="1AUA"/>
<dbReference type="PDBsum" id="6F0E"/>
<dbReference type="PDBsum" id="7ZG9"/>
<dbReference type="PDBsum" id="7ZGA"/>
<dbReference type="PDBsum" id="7ZGB"/>
<dbReference type="PDBsum" id="7ZGC"/>
<dbReference type="PDBsum" id="7ZGD"/>
<dbReference type="SMR" id="P24280"/>
<dbReference type="BioGRID" id="35255">
    <property type="interactions" value="277"/>
</dbReference>
<dbReference type="DIP" id="DIP-1610N"/>
<dbReference type="FunCoup" id="P24280">
    <property type="interactions" value="406"/>
</dbReference>
<dbReference type="IntAct" id="P24280">
    <property type="interactions" value="8"/>
</dbReference>
<dbReference type="MINT" id="P24280"/>
<dbReference type="STRING" id="4932.YMR079W"/>
<dbReference type="SwissLipids" id="SLP:000000359"/>
<dbReference type="GlyGen" id="P24280">
    <property type="glycosylation" value="1 site"/>
</dbReference>
<dbReference type="iPTMnet" id="P24280"/>
<dbReference type="PaxDb" id="4932-YMR079W"/>
<dbReference type="PeptideAtlas" id="P24280"/>
<dbReference type="EnsemblFungi" id="YMR079W_mRNA">
    <property type="protein sequence ID" value="YMR079W"/>
    <property type="gene ID" value="YMR079W"/>
</dbReference>
<dbReference type="GeneID" id="855103"/>
<dbReference type="KEGG" id="sce:YMR079W"/>
<dbReference type="AGR" id="SGD:S000004684"/>
<dbReference type="SGD" id="S000004684">
    <property type="gene designation" value="SEC14"/>
</dbReference>
<dbReference type="VEuPathDB" id="FungiDB:YMR079W"/>
<dbReference type="eggNOG" id="KOG1471">
    <property type="taxonomic scope" value="Eukaryota"/>
</dbReference>
<dbReference type="GeneTree" id="ENSGT00530000066638"/>
<dbReference type="HOGENOM" id="CLU_014001_0_1_1"/>
<dbReference type="InParanoid" id="P24280"/>
<dbReference type="OMA" id="WAFSTVW"/>
<dbReference type="OrthoDB" id="1434354at2759"/>
<dbReference type="BioCyc" id="YEAST:G3O-32781-MONOMER"/>
<dbReference type="BioGRID-ORCS" id="855103">
    <property type="hits" value="1 hit in 10 CRISPR screens"/>
</dbReference>
<dbReference type="CD-CODE" id="E03F929F">
    <property type="entry name" value="Stress granule"/>
</dbReference>
<dbReference type="EvolutionaryTrace" id="P24280"/>
<dbReference type="PRO" id="PR:P24280"/>
<dbReference type="Proteomes" id="UP000002311">
    <property type="component" value="Chromosome XIII"/>
</dbReference>
<dbReference type="RNAct" id="P24280">
    <property type="molecule type" value="protein"/>
</dbReference>
<dbReference type="GO" id="GO:0005737">
    <property type="term" value="C:cytoplasm"/>
    <property type="evidence" value="ECO:0000314"/>
    <property type="project" value="SGD"/>
</dbReference>
<dbReference type="GO" id="GO:0005829">
    <property type="term" value="C:cytosol"/>
    <property type="evidence" value="ECO:0000314"/>
    <property type="project" value="SGD"/>
</dbReference>
<dbReference type="GO" id="GO:0005794">
    <property type="term" value="C:Golgi apparatus"/>
    <property type="evidence" value="ECO:0000314"/>
    <property type="project" value="SGD"/>
</dbReference>
<dbReference type="GO" id="GO:0000139">
    <property type="term" value="C:Golgi membrane"/>
    <property type="evidence" value="ECO:0000314"/>
    <property type="project" value="SGD"/>
</dbReference>
<dbReference type="GO" id="GO:0008525">
    <property type="term" value="F:phosphatidylcholine transporter activity"/>
    <property type="evidence" value="ECO:0000314"/>
    <property type="project" value="SGD"/>
</dbReference>
<dbReference type="GO" id="GO:0008526">
    <property type="term" value="F:phosphatidylinositol transfer activity"/>
    <property type="evidence" value="ECO:0000314"/>
    <property type="project" value="SGD"/>
</dbReference>
<dbReference type="GO" id="GO:0030437">
    <property type="term" value="P:ascospore formation"/>
    <property type="evidence" value="ECO:0000315"/>
    <property type="project" value="SGD"/>
</dbReference>
<dbReference type="GO" id="GO:0043001">
    <property type="term" value="P:Golgi to plasma membrane protein transport"/>
    <property type="evidence" value="ECO:0000315"/>
    <property type="project" value="SGD"/>
</dbReference>
<dbReference type="GO" id="GO:0006896">
    <property type="term" value="P:Golgi to vacuole transport"/>
    <property type="evidence" value="ECO:0000315"/>
    <property type="project" value="SGD"/>
</dbReference>
<dbReference type="GO" id="GO:0048194">
    <property type="term" value="P:Golgi vesicle budding"/>
    <property type="evidence" value="ECO:0000314"/>
    <property type="project" value="SGD"/>
</dbReference>
<dbReference type="GO" id="GO:2001246">
    <property type="term" value="P:negative regulation of phosphatidylcholine biosynthetic process"/>
    <property type="evidence" value="ECO:0000314"/>
    <property type="project" value="SGD"/>
</dbReference>
<dbReference type="GO" id="GO:1901352">
    <property type="term" value="P:negative regulation of phosphatidylglycerol biosynthetic process"/>
    <property type="evidence" value="ECO:0000315"/>
    <property type="project" value="SGD"/>
</dbReference>
<dbReference type="GO" id="GO:0046488">
    <property type="term" value="P:phosphatidylinositol metabolic process"/>
    <property type="evidence" value="ECO:0000315"/>
    <property type="project" value="SGD"/>
</dbReference>
<dbReference type="GO" id="GO:0015914">
    <property type="term" value="P:phospholipid transport"/>
    <property type="evidence" value="ECO:0000314"/>
    <property type="project" value="SGD"/>
</dbReference>
<dbReference type="GO" id="GO:0006892">
    <property type="term" value="P:post-Golgi vesicle-mediated transport"/>
    <property type="evidence" value="ECO:0000318"/>
    <property type="project" value="GO_Central"/>
</dbReference>
<dbReference type="CDD" id="cd00170">
    <property type="entry name" value="SEC14"/>
    <property type="match status" value="1"/>
</dbReference>
<dbReference type="FunFam" id="1.10.8.20:FF:000005">
    <property type="entry name" value="SEC14 cytosolic factor"/>
    <property type="match status" value="1"/>
</dbReference>
<dbReference type="FunFam" id="3.40.525.10:FF:000011">
    <property type="entry name" value="SEC14 cytosolic factor"/>
    <property type="match status" value="1"/>
</dbReference>
<dbReference type="Gene3D" id="3.40.525.10">
    <property type="entry name" value="CRAL-TRIO lipid binding domain"/>
    <property type="match status" value="1"/>
</dbReference>
<dbReference type="Gene3D" id="1.10.8.20">
    <property type="entry name" value="N-terminal domain of phosphatidylinositol transfer protein sec14p"/>
    <property type="match status" value="1"/>
</dbReference>
<dbReference type="InterPro" id="IPR001251">
    <property type="entry name" value="CRAL-TRIO_dom"/>
</dbReference>
<dbReference type="InterPro" id="IPR036865">
    <property type="entry name" value="CRAL-TRIO_dom_sf"/>
</dbReference>
<dbReference type="InterPro" id="IPR011074">
    <property type="entry name" value="CRAL/TRIO_N_dom"/>
</dbReference>
<dbReference type="InterPro" id="IPR036273">
    <property type="entry name" value="CRAL/TRIO_N_dom_sf"/>
</dbReference>
<dbReference type="InterPro" id="IPR051026">
    <property type="entry name" value="PI/PC_transfer"/>
</dbReference>
<dbReference type="PANTHER" id="PTHR45657">
    <property type="entry name" value="CRAL-TRIO DOMAIN-CONTAINING PROTEIN YKL091C-RELATED"/>
    <property type="match status" value="1"/>
</dbReference>
<dbReference type="PANTHER" id="PTHR45657:SF1">
    <property type="entry name" value="CRAL-TRIO DOMAIN-CONTAINING PROTEIN YKL091C-RELATED"/>
    <property type="match status" value="1"/>
</dbReference>
<dbReference type="Pfam" id="PF00650">
    <property type="entry name" value="CRAL_TRIO"/>
    <property type="match status" value="1"/>
</dbReference>
<dbReference type="Pfam" id="PF03765">
    <property type="entry name" value="CRAL_TRIO_N"/>
    <property type="match status" value="1"/>
</dbReference>
<dbReference type="PRINTS" id="PR00180">
    <property type="entry name" value="CRETINALDHBP"/>
</dbReference>
<dbReference type="SMART" id="SM01100">
    <property type="entry name" value="CRAL_TRIO_N"/>
    <property type="match status" value="1"/>
</dbReference>
<dbReference type="SMART" id="SM00516">
    <property type="entry name" value="SEC14"/>
    <property type="match status" value="1"/>
</dbReference>
<dbReference type="SUPFAM" id="SSF52087">
    <property type="entry name" value="CRAL/TRIO domain"/>
    <property type="match status" value="1"/>
</dbReference>
<dbReference type="SUPFAM" id="SSF46938">
    <property type="entry name" value="CRAL/TRIO N-terminal domain"/>
    <property type="match status" value="1"/>
</dbReference>
<dbReference type="PROSITE" id="PS50191">
    <property type="entry name" value="CRAL_TRIO"/>
    <property type="match status" value="1"/>
</dbReference>
<sequence length="304" mass="34901">MVTQQEKEFLESYPQNCPPDALPGTPGNLDSAQEKALAELRKLLEDAGFIERLDDSTLLRFLRARKFDVQLAKEMFENCEKWRKDYGTDTILQDFHYDEKPLIAKFYPQYYHKTDKDGRPVYFEELGAVNLHEMNKVTSEERMLKNLVWEYESVVQYRLPACSRAAGHLVETSCTIMDLKGISISSAYSVMSYVREASYISQNYYPERMGKFYIINAPFGFSTAFRLFKPFLDPVTVSKIFILGSSYQKELLKQIPAENLPVKFGGKSEVDESKGGLYLSDIGPWRDPKYIGPEGEAPEAFSMK</sequence>
<accession>P24280</accession>
<accession>D6VZQ3</accession>